<feature type="chain" id="PRO_0000315728" description="Metallophosphoesterase 1">
    <location>
        <begin position="1"/>
        <end position="396"/>
    </location>
</feature>
<feature type="transmembrane region" description="Helical" evidence="2">
    <location>
        <begin position="27"/>
        <end position="47"/>
    </location>
</feature>
<feature type="transmembrane region" description="Helical" evidence="2">
    <location>
        <begin position="356"/>
        <end position="376"/>
    </location>
</feature>
<feature type="short sequence motif" description="Di-lysine motif" evidence="1">
    <location>
        <begin position="392"/>
        <end position="396"/>
    </location>
</feature>
<feature type="binding site" evidence="1">
    <location>
        <position position="77"/>
    </location>
    <ligand>
        <name>a divalent metal cation</name>
        <dbReference type="ChEBI" id="CHEBI:60240"/>
        <label>2</label>
    </ligand>
</feature>
<feature type="binding site" evidence="1">
    <location>
        <position position="119"/>
    </location>
    <ligand>
        <name>a divalent metal cation</name>
        <dbReference type="ChEBI" id="CHEBI:60240"/>
        <label>1</label>
    </ligand>
</feature>
<feature type="binding site" evidence="1">
    <location>
        <position position="119"/>
    </location>
    <ligand>
        <name>a divalent metal cation</name>
        <dbReference type="ChEBI" id="CHEBI:60240"/>
        <label>2</label>
    </ligand>
</feature>
<feature type="binding site" evidence="1">
    <location>
        <position position="157"/>
    </location>
    <ligand>
        <name>a divalent metal cation</name>
        <dbReference type="ChEBI" id="CHEBI:60240"/>
        <label>1</label>
    </ligand>
</feature>
<feature type="binding site" evidence="1">
    <location>
        <position position="249"/>
    </location>
    <ligand>
        <name>a divalent metal cation</name>
        <dbReference type="ChEBI" id="CHEBI:60240"/>
        <label>1</label>
    </ligand>
</feature>
<feature type="binding site" evidence="1">
    <location>
        <position position="249"/>
    </location>
    <ligand>
        <name>a divalent metal cation</name>
        <dbReference type="ChEBI" id="CHEBI:60240"/>
        <label>2</label>
    </ligand>
</feature>
<feature type="binding site" evidence="1">
    <location>
        <position position="303"/>
    </location>
    <ligand>
        <name>a divalent metal cation</name>
        <dbReference type="ChEBI" id="CHEBI:60240"/>
        <label>1</label>
    </ligand>
</feature>
<feature type="binding site" evidence="1">
    <location>
        <position position="305"/>
    </location>
    <ligand>
        <name>a divalent metal cation</name>
        <dbReference type="ChEBI" id="CHEBI:60240"/>
        <label>2</label>
    </ligand>
</feature>
<feature type="sequence conflict" description="In Ref. 1; BAE01282." evidence="3" ref="1">
    <original>L</original>
    <variation>F</variation>
    <location>
        <position position="26"/>
    </location>
</feature>
<feature type="sequence conflict" description="In Ref. 1; BAE01282." evidence="3" ref="1">
    <original>L</original>
    <variation>F</variation>
    <location>
        <position position="102"/>
    </location>
</feature>
<feature type="sequence conflict" description="In Ref. 1; BAE01282." evidence="3" ref="1">
    <original>D</original>
    <variation>N</variation>
    <location>
        <position position="272"/>
    </location>
</feature>
<feature type="sequence conflict" description="In Ref. 1; BAE01282." evidence="3" ref="1">
    <original>T</original>
    <variation>M</variation>
    <location>
        <position position="340"/>
    </location>
</feature>
<keyword id="KW-0931">ER-Golgi transport</keyword>
<keyword id="KW-0337">GPI-anchor biosynthesis</keyword>
<keyword id="KW-0378">Hydrolase</keyword>
<keyword id="KW-0464">Manganese</keyword>
<keyword id="KW-0472">Membrane</keyword>
<keyword id="KW-0479">Metal-binding</keyword>
<keyword id="KW-1185">Reference proteome</keyword>
<keyword id="KW-0812">Transmembrane</keyword>
<keyword id="KW-1133">Transmembrane helix</keyword>
<keyword id="KW-0813">Transport</keyword>
<evidence type="ECO:0000250" key="1">
    <source>
        <dbReference type="UniProtKB" id="Q53F39"/>
    </source>
</evidence>
<evidence type="ECO:0000255" key="2"/>
<evidence type="ECO:0000305" key="3"/>
<name>MPPE1_MACFA</name>
<sequence length="396" mass="45254">MAMIEVGFERQNFYPLKRKSALLLKLIAVVFAVLLFCEFLIYYLAIFQCNWPEVKTTAYDGEQASHEPVLKAMFLADTHLLGEFLGHWLDKLRREWQMERALQTALWLLQPEVVFILGDVFDEGKWSTPEAWADDVERFQKMFRHPSHVQLKVVAGNHDIGFHYEMNTYKVERFEKVFSSERLFSWKGINFVMVNSVAMNGDGCGICSEAEAELIEVSHRLNCSREARGSRRCGPGPLLPVSAPVLLQHYPLYRRSDANCSGDDAAPPEERDIPFKENYDVLSREASQKLLWWLQPRLVLSGHTHSACEVHHGGRVPEFSVPSFSWRNRNNPSFIMGSITPTDYALSKCYLPREDVVLVIYCGAVGFLVVLTLSHLGLLASPFLSGLNLLRKRKTR</sequence>
<accession>Q9GMS6</accession>
<accession>Q4R6J3</accession>
<comment type="function">
    <text evidence="1">Metallophosphoesterase that catalyzes the removal of a side-chain ethanolamine-phosphate (EtNP) from the second mannose of the GPI-anchor protein intermediate. Participates in the glycan remodeling steps of GPI-anchor maturation to allow an efficient transport of GPI-anchor proteins from the endoplasmic reticulum to the Golgi.</text>
</comment>
<comment type="cofactor">
    <cofactor evidence="1">
        <name>Mn(2+)</name>
        <dbReference type="ChEBI" id="CHEBI:29035"/>
    </cofactor>
    <text evidence="1">Binds 2 manganese ions per subunit.</text>
</comment>
<comment type="subunit">
    <text evidence="1">Interacts with GPI-anchor proteins (via the GPI portion). Interacts with TMED10.</text>
</comment>
<comment type="subcellular location">
    <subcellularLocation>
        <location evidence="1">Endoplasmic reticulum-Golgi intermediate compartment membrane</location>
        <topology evidence="2">Multi-pass membrane protein</topology>
    </subcellularLocation>
    <text evidence="1">Also localizes to endoplasmic reticulum exit site.</text>
</comment>
<comment type="domain">
    <text evidence="1">The di-lysine motif (KxKxx) acts as an endoplasmic reticulum retrieval signal.</text>
</comment>
<comment type="similarity">
    <text evidence="3">Belongs to the metallophosphoesterase superfamily. MPPE1 family.</text>
</comment>
<gene>
    <name evidence="1" type="primary">MPPE1</name>
    <name evidence="1" type="synonym">PGAP5</name>
    <name type="ORF">QccE-17977</name>
    <name type="ORF">QtsA-17896</name>
</gene>
<organism>
    <name type="scientific">Macaca fascicularis</name>
    <name type="common">Crab-eating macaque</name>
    <name type="synonym">Cynomolgus monkey</name>
    <dbReference type="NCBI Taxonomy" id="9541"/>
    <lineage>
        <taxon>Eukaryota</taxon>
        <taxon>Metazoa</taxon>
        <taxon>Chordata</taxon>
        <taxon>Craniata</taxon>
        <taxon>Vertebrata</taxon>
        <taxon>Euteleostomi</taxon>
        <taxon>Mammalia</taxon>
        <taxon>Eutheria</taxon>
        <taxon>Euarchontoglires</taxon>
        <taxon>Primates</taxon>
        <taxon>Haplorrhini</taxon>
        <taxon>Catarrhini</taxon>
        <taxon>Cercopithecidae</taxon>
        <taxon>Cercopithecinae</taxon>
        <taxon>Macaca</taxon>
    </lineage>
</organism>
<dbReference type="EC" id="3.1.-.-" evidence="1"/>
<dbReference type="EMBL" id="AB047842">
    <property type="protein sequence ID" value="BAB12268.1"/>
    <property type="molecule type" value="mRNA"/>
</dbReference>
<dbReference type="EMBL" id="AB169190">
    <property type="protein sequence ID" value="BAE01282.1"/>
    <property type="molecule type" value="mRNA"/>
</dbReference>
<dbReference type="RefSeq" id="NP_001270651.1">
    <property type="nucleotide sequence ID" value="NM_001283722.1"/>
</dbReference>
<dbReference type="STRING" id="9541.ENSMFAP00000029361"/>
<dbReference type="eggNOG" id="KOG3662">
    <property type="taxonomic scope" value="Eukaryota"/>
</dbReference>
<dbReference type="Proteomes" id="UP000233100">
    <property type="component" value="Unplaced"/>
</dbReference>
<dbReference type="GO" id="GO:0070971">
    <property type="term" value="C:endoplasmic reticulum exit site"/>
    <property type="evidence" value="ECO:0000250"/>
    <property type="project" value="UniProtKB"/>
</dbReference>
<dbReference type="GO" id="GO:0033116">
    <property type="term" value="C:endoplasmic reticulum-Golgi intermediate compartment membrane"/>
    <property type="evidence" value="ECO:0007669"/>
    <property type="project" value="UniProtKB-SubCell"/>
</dbReference>
<dbReference type="GO" id="GO:0005794">
    <property type="term" value="C:Golgi apparatus"/>
    <property type="evidence" value="ECO:0007669"/>
    <property type="project" value="UniProtKB-SubCell"/>
</dbReference>
<dbReference type="GO" id="GO:0062050">
    <property type="term" value="F:GPI-mannose ethanolamine phosphate phosphodiesterase activity"/>
    <property type="evidence" value="ECO:0000250"/>
    <property type="project" value="UniProtKB"/>
</dbReference>
<dbReference type="GO" id="GO:0030145">
    <property type="term" value="F:manganese ion binding"/>
    <property type="evidence" value="ECO:0000250"/>
    <property type="project" value="UniProtKB"/>
</dbReference>
<dbReference type="GO" id="GO:0006888">
    <property type="term" value="P:endoplasmic reticulum to Golgi vesicle-mediated transport"/>
    <property type="evidence" value="ECO:0000250"/>
    <property type="project" value="UniProtKB"/>
</dbReference>
<dbReference type="GO" id="GO:0006506">
    <property type="term" value="P:GPI anchor biosynthetic process"/>
    <property type="evidence" value="ECO:0000250"/>
    <property type="project" value="UniProtKB"/>
</dbReference>
<dbReference type="CDD" id="cd08165">
    <property type="entry name" value="MPP_MPPE1"/>
    <property type="match status" value="1"/>
</dbReference>
<dbReference type="FunFam" id="3.60.21.10:FF:000022">
    <property type="entry name" value="Putative metallophosphoesterase 1"/>
    <property type="match status" value="1"/>
</dbReference>
<dbReference type="Gene3D" id="3.60.21.10">
    <property type="match status" value="1"/>
</dbReference>
<dbReference type="InterPro" id="IPR004843">
    <property type="entry name" value="Calcineurin-like_PHP_ApaH"/>
</dbReference>
<dbReference type="InterPro" id="IPR029052">
    <property type="entry name" value="Metallo-depent_PP-like"/>
</dbReference>
<dbReference type="InterPro" id="IPR039541">
    <property type="entry name" value="MPP_MPPE1"/>
</dbReference>
<dbReference type="InterPro" id="IPR033308">
    <property type="entry name" value="PGAP5/Cdc1/Ted1"/>
</dbReference>
<dbReference type="PANTHER" id="PTHR13315">
    <property type="entry name" value="METALLO PHOSPHOESTERASE RELATED"/>
    <property type="match status" value="1"/>
</dbReference>
<dbReference type="PANTHER" id="PTHR13315:SF0">
    <property type="entry name" value="METALLOPHOSPHOESTERASE 1"/>
    <property type="match status" value="1"/>
</dbReference>
<dbReference type="Pfam" id="PF00149">
    <property type="entry name" value="Metallophos"/>
    <property type="match status" value="1"/>
</dbReference>
<dbReference type="SUPFAM" id="SSF56300">
    <property type="entry name" value="Metallo-dependent phosphatases"/>
    <property type="match status" value="1"/>
</dbReference>
<proteinExistence type="evidence at transcript level"/>
<protein>
    <recommendedName>
        <fullName evidence="1">Metallophosphoesterase 1</fullName>
        <ecNumber evidence="1">3.1.-.-</ecNumber>
    </recommendedName>
    <alternativeName>
        <fullName>Post-GPI attachment to proteins factor 5</fullName>
    </alternativeName>
</protein>
<reference key="1">
    <citation type="submission" date="2005-06" db="EMBL/GenBank/DDBJ databases">
        <title>Isolation of full-length cDNA clones from macaque brain cDNA libraries.</title>
        <authorList>
            <person name="Osada N."/>
            <person name="Hida M."/>
            <person name="Kusuda J."/>
            <person name="Tanuma R."/>
            <person name="Iseki K."/>
            <person name="Hirai M."/>
            <person name="Terao K."/>
            <person name="Suzuki Y."/>
            <person name="Sugano S."/>
            <person name="Hashimoto K."/>
        </authorList>
    </citation>
    <scope>NUCLEOTIDE SEQUENCE [LARGE SCALE MRNA]</scope>
    <source>
        <tissue>Brain cortex</tissue>
        <tissue>Testis</tissue>
    </source>
</reference>